<evidence type="ECO:0000250" key="1"/>
<evidence type="ECO:0000255" key="2"/>
<evidence type="ECO:0000255" key="3">
    <source>
        <dbReference type="PROSITE-ProRule" id="PRU00114"/>
    </source>
</evidence>
<evidence type="ECO:0000256" key="4">
    <source>
        <dbReference type="SAM" id="MobiDB-lite"/>
    </source>
</evidence>
<evidence type="ECO:0000305" key="5"/>
<keyword id="KW-1015">Disulfide bond</keyword>
<keyword id="KW-0325">Glycoprotein</keyword>
<keyword id="KW-0391">Immunity</keyword>
<keyword id="KW-0472">Membrane</keyword>
<keyword id="KW-0490">MHC I</keyword>
<keyword id="KW-1185">Reference proteome</keyword>
<keyword id="KW-0732">Signal</keyword>
<keyword id="KW-0812">Transmembrane</keyword>
<keyword id="KW-1133">Transmembrane helix</keyword>
<sequence length="362" mass="40249">MRVTAPRTLLLLLSAALALTETWAGSHSMRYFDTAVSRPGRGEPRFITVGYVDDTQFVRFDSDAASPRMEPRAPWIEQEGPEYWDRETQTSKAQAQTDRENLRIALRYYNQSEAGSHTIQWMYGCDMGPDGRLLRGYSQSAYDGKDYIALNEDLSSWTAADTAAQITQRKWEAAREAEQLRAYLEGTCVEWLRRYLENGRETLQRADTPKTHVTHHPISDHEATLRCWALGFYPAEITLTWQRDGEDQTQDTELVETRPAGDGTFQKWAAVVVPSGEEERYTCHVQHEGLPKPLTLRWEPSSQSTIPIVGIVAGLAVLAVVVIGAVVTAVICRRKSSGGKGGSYSQAASSDSAQGSDVSLTA</sequence>
<proteinExistence type="evidence at transcript level"/>
<organism>
    <name type="scientific">Gorilla gorilla gorilla</name>
    <name type="common">Western lowland gorilla</name>
    <dbReference type="NCBI Taxonomy" id="9595"/>
    <lineage>
        <taxon>Eukaryota</taxon>
        <taxon>Metazoa</taxon>
        <taxon>Chordata</taxon>
        <taxon>Craniata</taxon>
        <taxon>Vertebrata</taxon>
        <taxon>Euteleostomi</taxon>
        <taxon>Mammalia</taxon>
        <taxon>Eutheria</taxon>
        <taxon>Euarchontoglires</taxon>
        <taxon>Primates</taxon>
        <taxon>Haplorrhini</taxon>
        <taxon>Catarrhini</taxon>
        <taxon>Hominidae</taxon>
        <taxon>Gorilla</taxon>
    </lineage>
</organism>
<reference key="1">
    <citation type="journal article" date="1991" name="J. Exp. Med.">
        <title>Gorilla class I major histocompatibility complex alleles: comparison to human and chimpanzee class I.</title>
        <authorList>
            <person name="Lawlor D.A."/>
            <person name="Warren E."/>
            <person name="Taylor P."/>
            <person name="Parham P."/>
        </authorList>
    </citation>
    <scope>NUCLEOTIDE SEQUENCE [MRNA]</scope>
</reference>
<feature type="signal peptide" evidence="1">
    <location>
        <begin position="1"/>
        <end position="24"/>
    </location>
</feature>
<feature type="chain" id="PRO_0000018903" description="Class I histocompatibility antigen, Gogo-B*0103 alpha chain">
    <location>
        <begin position="25"/>
        <end position="362"/>
    </location>
</feature>
<feature type="topological domain" description="Extracellular" evidence="2">
    <location>
        <begin position="25"/>
        <end position="308"/>
    </location>
</feature>
<feature type="transmembrane region" description="Helical" evidence="2">
    <location>
        <begin position="309"/>
        <end position="332"/>
    </location>
</feature>
<feature type="topological domain" description="Cytoplasmic" evidence="2">
    <location>
        <begin position="333"/>
        <end position="362"/>
    </location>
</feature>
<feature type="domain" description="Ig-like C1-type">
    <location>
        <begin position="209"/>
        <end position="295"/>
    </location>
</feature>
<feature type="region of interest" description="Alpha-1">
    <location>
        <begin position="25"/>
        <end position="114"/>
    </location>
</feature>
<feature type="region of interest" description="Alpha-2">
    <location>
        <begin position="115"/>
        <end position="206"/>
    </location>
</feature>
<feature type="region of interest" description="Alpha-3">
    <location>
        <begin position="207"/>
        <end position="298"/>
    </location>
</feature>
<feature type="region of interest" description="Connecting peptide">
    <location>
        <begin position="299"/>
        <end position="308"/>
    </location>
</feature>
<feature type="region of interest" description="Disordered" evidence="4">
    <location>
        <begin position="335"/>
        <end position="362"/>
    </location>
</feature>
<feature type="compositionally biased region" description="Low complexity" evidence="4">
    <location>
        <begin position="343"/>
        <end position="362"/>
    </location>
</feature>
<feature type="glycosylation site" description="N-linked (GlcNAc...) asparagine" evidence="1">
    <location>
        <position position="110"/>
    </location>
</feature>
<feature type="disulfide bond" evidence="3">
    <location>
        <begin position="125"/>
        <end position="188"/>
    </location>
</feature>
<feature type="disulfide bond" evidence="3">
    <location>
        <begin position="227"/>
        <end position="283"/>
    </location>
</feature>
<name>1B03_GORGO</name>
<protein>
    <recommendedName>
        <fullName>Class I histocompatibility antigen, Gogo-B*0103 alpha chain</fullName>
    </recommendedName>
</protein>
<accession>P30381</accession>
<comment type="function">
    <text>Involved in the presentation of foreign antigens to the immune system.</text>
</comment>
<comment type="subunit">
    <text>Heterodimer of an alpha chain and a beta chain (beta-2-microglobulin).</text>
</comment>
<comment type="subcellular location">
    <subcellularLocation>
        <location>Membrane</location>
        <topology>Single-pass type I membrane protein</topology>
    </subcellularLocation>
</comment>
<comment type="similarity">
    <text evidence="5">Belongs to the MHC class I family.</text>
</comment>
<dbReference type="EMBL" id="X60254">
    <property type="protein sequence ID" value="CAA42806.1"/>
    <property type="molecule type" value="mRNA"/>
</dbReference>
<dbReference type="PIR" id="JH0541">
    <property type="entry name" value="JH0541"/>
</dbReference>
<dbReference type="SMR" id="P30381"/>
<dbReference type="FunCoup" id="P30381">
    <property type="interactions" value="802"/>
</dbReference>
<dbReference type="eggNOG" id="ENOG502RQEK">
    <property type="taxonomic scope" value="Eukaryota"/>
</dbReference>
<dbReference type="InParanoid" id="P30381"/>
<dbReference type="Proteomes" id="UP000001519">
    <property type="component" value="Unplaced"/>
</dbReference>
<dbReference type="GO" id="GO:0031901">
    <property type="term" value="C:early endosome membrane"/>
    <property type="evidence" value="ECO:0007669"/>
    <property type="project" value="UniProtKB-ARBA"/>
</dbReference>
<dbReference type="GO" id="GO:0012507">
    <property type="term" value="C:ER to Golgi transport vesicle membrane"/>
    <property type="evidence" value="ECO:0007669"/>
    <property type="project" value="UniProtKB-ARBA"/>
</dbReference>
<dbReference type="GO" id="GO:0009897">
    <property type="term" value="C:external side of plasma membrane"/>
    <property type="evidence" value="ECO:0000318"/>
    <property type="project" value="GO_Central"/>
</dbReference>
<dbReference type="GO" id="GO:0005615">
    <property type="term" value="C:extracellular space"/>
    <property type="evidence" value="ECO:0000318"/>
    <property type="project" value="GO_Central"/>
</dbReference>
<dbReference type="GO" id="GO:0098553">
    <property type="term" value="C:lumenal side of endoplasmic reticulum membrane"/>
    <property type="evidence" value="ECO:0007669"/>
    <property type="project" value="UniProtKB-ARBA"/>
</dbReference>
<dbReference type="GO" id="GO:0042612">
    <property type="term" value="C:MHC class I protein complex"/>
    <property type="evidence" value="ECO:0007669"/>
    <property type="project" value="UniProtKB-KW"/>
</dbReference>
<dbReference type="GO" id="GO:0030670">
    <property type="term" value="C:phagocytic vesicle membrane"/>
    <property type="evidence" value="ECO:0007669"/>
    <property type="project" value="UniProtKB-ARBA"/>
</dbReference>
<dbReference type="GO" id="GO:0055038">
    <property type="term" value="C:recycling endosome membrane"/>
    <property type="evidence" value="ECO:0007669"/>
    <property type="project" value="UniProtKB-ARBA"/>
</dbReference>
<dbReference type="GO" id="GO:0042605">
    <property type="term" value="F:peptide antigen binding"/>
    <property type="evidence" value="ECO:0000318"/>
    <property type="project" value="GO_Central"/>
</dbReference>
<dbReference type="GO" id="GO:0005102">
    <property type="term" value="F:signaling receptor binding"/>
    <property type="evidence" value="ECO:0000318"/>
    <property type="project" value="GO_Central"/>
</dbReference>
<dbReference type="GO" id="GO:0002486">
    <property type="term" value="P:antigen processing and presentation of endogenous peptide antigen via MHC class I via ER pathway, TAP-independent"/>
    <property type="evidence" value="ECO:0000318"/>
    <property type="project" value="GO_Central"/>
</dbReference>
<dbReference type="GO" id="GO:0002476">
    <property type="term" value="P:antigen processing and presentation of endogenous peptide antigen via MHC class Ib"/>
    <property type="evidence" value="ECO:0000318"/>
    <property type="project" value="GO_Central"/>
</dbReference>
<dbReference type="GO" id="GO:0006955">
    <property type="term" value="P:immune response"/>
    <property type="evidence" value="ECO:0000318"/>
    <property type="project" value="GO_Central"/>
</dbReference>
<dbReference type="GO" id="GO:0001916">
    <property type="term" value="P:positive regulation of T cell mediated cytotoxicity"/>
    <property type="evidence" value="ECO:0000318"/>
    <property type="project" value="GO_Central"/>
</dbReference>
<dbReference type="CDD" id="cd21026">
    <property type="entry name" value="IgC1_MHC_Ia_HLA-B"/>
    <property type="match status" value="1"/>
</dbReference>
<dbReference type="FunFam" id="2.60.40.10:FF:000014">
    <property type="entry name" value="H-2 class I histocompatibility antigen, alpha chain"/>
    <property type="match status" value="1"/>
</dbReference>
<dbReference type="FunFam" id="3.30.500.10:FF:000001">
    <property type="entry name" value="H-2 class I histocompatibility antigen, alpha chain"/>
    <property type="match status" value="1"/>
</dbReference>
<dbReference type="Gene3D" id="2.60.40.10">
    <property type="entry name" value="Immunoglobulins"/>
    <property type="match status" value="1"/>
</dbReference>
<dbReference type="Gene3D" id="3.30.500.10">
    <property type="entry name" value="MHC class I-like antigen recognition-like"/>
    <property type="match status" value="1"/>
</dbReference>
<dbReference type="InterPro" id="IPR007110">
    <property type="entry name" value="Ig-like_dom"/>
</dbReference>
<dbReference type="InterPro" id="IPR036179">
    <property type="entry name" value="Ig-like_dom_sf"/>
</dbReference>
<dbReference type="InterPro" id="IPR013783">
    <property type="entry name" value="Ig-like_fold"/>
</dbReference>
<dbReference type="InterPro" id="IPR003006">
    <property type="entry name" value="Ig/MHC_CS"/>
</dbReference>
<dbReference type="InterPro" id="IPR003597">
    <property type="entry name" value="Ig_C1-set"/>
</dbReference>
<dbReference type="InterPro" id="IPR050208">
    <property type="entry name" value="MHC_class-I_related"/>
</dbReference>
<dbReference type="InterPro" id="IPR011161">
    <property type="entry name" value="MHC_I-like_Ag-recog"/>
</dbReference>
<dbReference type="InterPro" id="IPR037055">
    <property type="entry name" value="MHC_I-like_Ag-recog_sf"/>
</dbReference>
<dbReference type="InterPro" id="IPR011162">
    <property type="entry name" value="MHC_I/II-like_Ag-recog"/>
</dbReference>
<dbReference type="InterPro" id="IPR001039">
    <property type="entry name" value="MHC_I_a_a1/a2"/>
</dbReference>
<dbReference type="InterPro" id="IPR010579">
    <property type="entry name" value="MHC_I_a_C"/>
</dbReference>
<dbReference type="PANTHER" id="PTHR16675:SF279">
    <property type="entry name" value="CLASS I HISTOCOMPATIBILITY ANTIGEN, GOGO-B*0102 ALPHA CHAIN"/>
    <property type="match status" value="1"/>
</dbReference>
<dbReference type="PANTHER" id="PTHR16675">
    <property type="entry name" value="MHC CLASS I-RELATED"/>
    <property type="match status" value="1"/>
</dbReference>
<dbReference type="Pfam" id="PF07654">
    <property type="entry name" value="C1-set"/>
    <property type="match status" value="1"/>
</dbReference>
<dbReference type="Pfam" id="PF00129">
    <property type="entry name" value="MHC_I"/>
    <property type="match status" value="1"/>
</dbReference>
<dbReference type="Pfam" id="PF06623">
    <property type="entry name" value="MHC_I_C"/>
    <property type="match status" value="1"/>
</dbReference>
<dbReference type="PRINTS" id="PR01638">
    <property type="entry name" value="MHCCLASSI"/>
</dbReference>
<dbReference type="SMART" id="SM00407">
    <property type="entry name" value="IGc1"/>
    <property type="match status" value="1"/>
</dbReference>
<dbReference type="SUPFAM" id="SSF48726">
    <property type="entry name" value="Immunoglobulin"/>
    <property type="match status" value="1"/>
</dbReference>
<dbReference type="SUPFAM" id="SSF54452">
    <property type="entry name" value="MHC antigen-recognition domain"/>
    <property type="match status" value="1"/>
</dbReference>
<dbReference type="PROSITE" id="PS50835">
    <property type="entry name" value="IG_LIKE"/>
    <property type="match status" value="1"/>
</dbReference>
<dbReference type="PROSITE" id="PS00290">
    <property type="entry name" value="IG_MHC"/>
    <property type="match status" value="1"/>
</dbReference>